<comment type="function">
    <text evidence="1">Part of a sulfur-relay system required for 2-thiolation of 5-methylaminomethyl-2-thiouridine (mnm(5)s(2)U) at tRNA wobble positions.</text>
</comment>
<comment type="subunit">
    <text evidence="1">Heterohexamer, formed by a dimer of trimers. The hexameric TusBCD complex contains 2 copies each of TusB, TusC and TusD. The TusBCD complex interacts with TusE.</text>
</comment>
<comment type="subcellular location">
    <subcellularLocation>
        <location evidence="1">Cytoplasm</location>
    </subcellularLocation>
</comment>
<comment type="similarity">
    <text evidence="1">Belongs to the DsrH/TusB family.</text>
</comment>
<protein>
    <recommendedName>
        <fullName evidence="1">Protein TusB</fullName>
    </recommendedName>
    <alternativeName>
        <fullName evidence="1">tRNA 2-thiouridine synthesizing protein B</fullName>
    </alternativeName>
</protein>
<proteinExistence type="inferred from homology"/>
<sequence>MLYTVSHSPYHCDLSALLRLATSEDDILLLQDGVIAALKESETLKLLLNNPASLFVLEDDVIARGLVGQISDNATLISYTHFVDLTLRHQQQLAW</sequence>
<name>TUSB_YERPP</name>
<organism>
    <name type="scientific">Yersinia pestis (strain Pestoides F)</name>
    <dbReference type="NCBI Taxonomy" id="386656"/>
    <lineage>
        <taxon>Bacteria</taxon>
        <taxon>Pseudomonadati</taxon>
        <taxon>Pseudomonadota</taxon>
        <taxon>Gammaproteobacteria</taxon>
        <taxon>Enterobacterales</taxon>
        <taxon>Yersiniaceae</taxon>
        <taxon>Yersinia</taxon>
    </lineage>
</organism>
<keyword id="KW-0963">Cytoplasm</keyword>
<keyword id="KW-0819">tRNA processing</keyword>
<dbReference type="EMBL" id="CP000668">
    <property type="protein sequence ID" value="ABP38546.1"/>
    <property type="molecule type" value="Genomic_DNA"/>
</dbReference>
<dbReference type="RefSeq" id="WP_002212322.1">
    <property type="nucleotide sequence ID" value="NZ_CP009715.1"/>
</dbReference>
<dbReference type="SMR" id="A4TGY3"/>
<dbReference type="GeneID" id="57974404"/>
<dbReference type="KEGG" id="ypp:YPDSF_0124"/>
<dbReference type="PATRIC" id="fig|386656.14.peg.443"/>
<dbReference type="GO" id="GO:1990228">
    <property type="term" value="C:sulfurtransferase complex"/>
    <property type="evidence" value="ECO:0007669"/>
    <property type="project" value="TreeGrafter"/>
</dbReference>
<dbReference type="GO" id="GO:0002143">
    <property type="term" value="P:tRNA wobble position uridine thiolation"/>
    <property type="evidence" value="ECO:0007669"/>
    <property type="project" value="InterPro"/>
</dbReference>
<dbReference type="FunFam" id="3.40.1260.10:FF:000002">
    <property type="entry name" value="Sulfurtransferase TusB"/>
    <property type="match status" value="1"/>
</dbReference>
<dbReference type="Gene3D" id="3.40.1260.10">
    <property type="entry name" value="DsrEFH-like"/>
    <property type="match status" value="1"/>
</dbReference>
<dbReference type="HAMAP" id="MF_01564">
    <property type="entry name" value="Thiourid_synth_B"/>
    <property type="match status" value="1"/>
</dbReference>
<dbReference type="InterPro" id="IPR027396">
    <property type="entry name" value="DsrEFH-like"/>
</dbReference>
<dbReference type="InterPro" id="IPR023526">
    <property type="entry name" value="Sulphur_relay_TusB"/>
</dbReference>
<dbReference type="InterPro" id="IPR007215">
    <property type="entry name" value="Sulphur_relay_TusB/DsrH"/>
</dbReference>
<dbReference type="NCBIfam" id="NF010035">
    <property type="entry name" value="PRK13510.1"/>
    <property type="match status" value="1"/>
</dbReference>
<dbReference type="NCBIfam" id="TIGR03011">
    <property type="entry name" value="sulf_tusB_dsrH"/>
    <property type="match status" value="1"/>
</dbReference>
<dbReference type="PANTHER" id="PTHR37526">
    <property type="entry name" value="PROTEIN TUSB"/>
    <property type="match status" value="1"/>
</dbReference>
<dbReference type="PANTHER" id="PTHR37526:SF1">
    <property type="entry name" value="PROTEIN TUSB"/>
    <property type="match status" value="1"/>
</dbReference>
<dbReference type="Pfam" id="PF04077">
    <property type="entry name" value="DsrH"/>
    <property type="match status" value="1"/>
</dbReference>
<dbReference type="SUPFAM" id="SSF75169">
    <property type="entry name" value="DsrEFH-like"/>
    <property type="match status" value="1"/>
</dbReference>
<feature type="chain" id="PRO_1000069066" description="Protein TusB">
    <location>
        <begin position="1"/>
        <end position="95"/>
    </location>
</feature>
<accession>A4TGY3</accession>
<gene>
    <name evidence="1" type="primary">tusB</name>
    <name type="ordered locus">YPDSF_0124</name>
</gene>
<reference key="1">
    <citation type="submission" date="2007-02" db="EMBL/GenBank/DDBJ databases">
        <title>Complete sequence of chromosome of Yersinia pestis Pestoides F.</title>
        <authorList>
            <consortium name="US DOE Joint Genome Institute"/>
            <person name="Copeland A."/>
            <person name="Lucas S."/>
            <person name="Lapidus A."/>
            <person name="Barry K."/>
            <person name="Detter J.C."/>
            <person name="Glavina del Rio T."/>
            <person name="Hammon N."/>
            <person name="Israni S."/>
            <person name="Dalin E."/>
            <person name="Tice H."/>
            <person name="Pitluck S."/>
            <person name="Di Bartolo G."/>
            <person name="Chain P."/>
            <person name="Malfatti S."/>
            <person name="Shin M."/>
            <person name="Vergez L."/>
            <person name="Schmutz J."/>
            <person name="Larimer F."/>
            <person name="Land M."/>
            <person name="Hauser L."/>
            <person name="Worsham P."/>
            <person name="Chu M."/>
            <person name="Bearden S."/>
            <person name="Garcia E."/>
            <person name="Richardson P."/>
        </authorList>
    </citation>
    <scope>NUCLEOTIDE SEQUENCE [LARGE SCALE GENOMIC DNA]</scope>
    <source>
        <strain>Pestoides F</strain>
    </source>
</reference>
<evidence type="ECO:0000255" key="1">
    <source>
        <dbReference type="HAMAP-Rule" id="MF_01564"/>
    </source>
</evidence>